<protein>
    <recommendedName>
        <fullName evidence="1">Large ribosomal subunit protein bL35</fullName>
    </recommendedName>
    <alternativeName>
        <fullName evidence="2">50S ribosomal protein L35</fullName>
    </alternativeName>
</protein>
<dbReference type="EMBL" id="AE000512">
    <property type="protein sequence ID" value="AAD36658.1"/>
    <property type="molecule type" value="Genomic_DNA"/>
</dbReference>
<dbReference type="PIR" id="C72233">
    <property type="entry name" value="C72233"/>
</dbReference>
<dbReference type="RefSeq" id="NP_229391.1">
    <property type="nucleotide sequence ID" value="NC_000853.1"/>
</dbReference>
<dbReference type="RefSeq" id="WP_004082029.1">
    <property type="nucleotide sequence ID" value="NZ_CP011107.1"/>
</dbReference>
<dbReference type="SMR" id="Q9X1S7"/>
<dbReference type="FunCoup" id="Q9X1S7">
    <property type="interactions" value="274"/>
</dbReference>
<dbReference type="STRING" id="243274.TM_1591"/>
<dbReference type="PaxDb" id="243274-THEMA_06300"/>
<dbReference type="EnsemblBacteria" id="AAD36658">
    <property type="protein sequence ID" value="AAD36658"/>
    <property type="gene ID" value="TM_1591"/>
</dbReference>
<dbReference type="KEGG" id="tma:TM1591"/>
<dbReference type="KEGG" id="tmi:THEMA_06300"/>
<dbReference type="KEGG" id="tmm:Tmari_1599"/>
<dbReference type="KEGG" id="tmw:THMA_1631"/>
<dbReference type="eggNOG" id="COG0291">
    <property type="taxonomic scope" value="Bacteria"/>
</dbReference>
<dbReference type="InParanoid" id="Q9X1S7"/>
<dbReference type="OrthoDB" id="47584at2"/>
<dbReference type="Proteomes" id="UP000008183">
    <property type="component" value="Chromosome"/>
</dbReference>
<dbReference type="GO" id="GO:0022625">
    <property type="term" value="C:cytosolic large ribosomal subunit"/>
    <property type="evidence" value="ECO:0000318"/>
    <property type="project" value="GO_Central"/>
</dbReference>
<dbReference type="GO" id="GO:0003735">
    <property type="term" value="F:structural constituent of ribosome"/>
    <property type="evidence" value="ECO:0000318"/>
    <property type="project" value="GO_Central"/>
</dbReference>
<dbReference type="GO" id="GO:0006412">
    <property type="term" value="P:translation"/>
    <property type="evidence" value="ECO:0007669"/>
    <property type="project" value="UniProtKB-UniRule"/>
</dbReference>
<dbReference type="FunFam" id="4.10.410.60:FF:000001">
    <property type="entry name" value="50S ribosomal protein L35"/>
    <property type="match status" value="1"/>
</dbReference>
<dbReference type="Gene3D" id="4.10.410.60">
    <property type="match status" value="1"/>
</dbReference>
<dbReference type="HAMAP" id="MF_00514">
    <property type="entry name" value="Ribosomal_bL35"/>
    <property type="match status" value="1"/>
</dbReference>
<dbReference type="InterPro" id="IPR001706">
    <property type="entry name" value="Ribosomal_bL35"/>
</dbReference>
<dbReference type="InterPro" id="IPR021137">
    <property type="entry name" value="Ribosomal_bL35-like"/>
</dbReference>
<dbReference type="InterPro" id="IPR018265">
    <property type="entry name" value="Ribosomal_bL35_CS"/>
</dbReference>
<dbReference type="InterPro" id="IPR037229">
    <property type="entry name" value="Ribosomal_bL35_sf"/>
</dbReference>
<dbReference type="NCBIfam" id="TIGR00001">
    <property type="entry name" value="rpmI_bact"/>
    <property type="match status" value="1"/>
</dbReference>
<dbReference type="PANTHER" id="PTHR33343">
    <property type="entry name" value="54S RIBOSOMAL PROTEIN BL35M"/>
    <property type="match status" value="1"/>
</dbReference>
<dbReference type="PANTHER" id="PTHR33343:SF1">
    <property type="entry name" value="LARGE RIBOSOMAL SUBUNIT PROTEIN BL35M"/>
    <property type="match status" value="1"/>
</dbReference>
<dbReference type="Pfam" id="PF01632">
    <property type="entry name" value="Ribosomal_L35p"/>
    <property type="match status" value="1"/>
</dbReference>
<dbReference type="PRINTS" id="PR00064">
    <property type="entry name" value="RIBOSOMALL35"/>
</dbReference>
<dbReference type="SUPFAM" id="SSF143034">
    <property type="entry name" value="L35p-like"/>
    <property type="match status" value="1"/>
</dbReference>
<dbReference type="PROSITE" id="PS00936">
    <property type="entry name" value="RIBOSOMAL_L35"/>
    <property type="match status" value="1"/>
</dbReference>
<organism>
    <name type="scientific">Thermotoga maritima (strain ATCC 43589 / DSM 3109 / JCM 10099 / NBRC 100826 / MSB8)</name>
    <dbReference type="NCBI Taxonomy" id="243274"/>
    <lineage>
        <taxon>Bacteria</taxon>
        <taxon>Thermotogati</taxon>
        <taxon>Thermotogota</taxon>
        <taxon>Thermotogae</taxon>
        <taxon>Thermotogales</taxon>
        <taxon>Thermotogaceae</taxon>
        <taxon>Thermotoga</taxon>
    </lineage>
</organism>
<evidence type="ECO:0000255" key="1">
    <source>
        <dbReference type="HAMAP-Rule" id="MF_00514"/>
    </source>
</evidence>
<evidence type="ECO:0000305" key="2"/>
<keyword id="KW-1185">Reference proteome</keyword>
<keyword id="KW-0687">Ribonucleoprotein</keyword>
<keyword id="KW-0689">Ribosomal protein</keyword>
<gene>
    <name evidence="1" type="primary">rpmI</name>
    <name type="ordered locus">TM_1591</name>
</gene>
<feature type="chain" id="PRO_0000177441" description="Large ribosomal subunit protein bL35">
    <location>
        <begin position="1"/>
        <end position="65"/>
    </location>
</feature>
<accession>Q9X1S7</accession>
<comment type="similarity">
    <text evidence="1">Belongs to the bacterial ribosomal protein bL35 family.</text>
</comment>
<proteinExistence type="inferred from homology"/>
<sequence>MPKVKTNRSAAKRFRITKNGKIMRNHAYRSHKTGKKRRNALRALRKKDVVSSADKNRVLRLLGKK</sequence>
<reference key="1">
    <citation type="journal article" date="1999" name="Nature">
        <title>Evidence for lateral gene transfer between Archaea and Bacteria from genome sequence of Thermotoga maritima.</title>
        <authorList>
            <person name="Nelson K.E."/>
            <person name="Clayton R.A."/>
            <person name="Gill S.R."/>
            <person name="Gwinn M.L."/>
            <person name="Dodson R.J."/>
            <person name="Haft D.H."/>
            <person name="Hickey E.K."/>
            <person name="Peterson J.D."/>
            <person name="Nelson W.C."/>
            <person name="Ketchum K.A."/>
            <person name="McDonald L.A."/>
            <person name="Utterback T.R."/>
            <person name="Malek J.A."/>
            <person name="Linher K.D."/>
            <person name="Garrett M.M."/>
            <person name="Stewart A.M."/>
            <person name="Cotton M.D."/>
            <person name="Pratt M.S."/>
            <person name="Phillips C.A."/>
            <person name="Richardson D.L."/>
            <person name="Heidelberg J.F."/>
            <person name="Sutton G.G."/>
            <person name="Fleischmann R.D."/>
            <person name="Eisen J.A."/>
            <person name="White O."/>
            <person name="Salzberg S.L."/>
            <person name="Smith H.O."/>
            <person name="Venter J.C."/>
            <person name="Fraser C.M."/>
        </authorList>
    </citation>
    <scope>NUCLEOTIDE SEQUENCE [LARGE SCALE GENOMIC DNA]</scope>
    <source>
        <strain>ATCC 43589 / DSM 3109 / JCM 10099 / NBRC 100826 / MSB8</strain>
    </source>
</reference>
<name>RL35_THEMA</name>